<evidence type="ECO:0000255" key="1">
    <source>
        <dbReference type="HAMAP-Rule" id="MF_00551"/>
    </source>
</evidence>
<feature type="chain" id="PRO_0000164496" description="Uridine kinase">
    <location>
        <begin position="1"/>
        <end position="207"/>
    </location>
</feature>
<feature type="binding site" evidence="1">
    <location>
        <begin position="11"/>
        <end position="18"/>
    </location>
    <ligand>
        <name>ATP</name>
        <dbReference type="ChEBI" id="CHEBI:30616"/>
    </ligand>
</feature>
<proteinExistence type="inferred from homology"/>
<dbReference type="EC" id="2.7.1.48" evidence="1"/>
<dbReference type="EMBL" id="AP006716">
    <property type="protein sequence ID" value="BAE04617.1"/>
    <property type="molecule type" value="Genomic_DNA"/>
</dbReference>
<dbReference type="RefSeq" id="WP_011275606.1">
    <property type="nucleotide sequence ID" value="NC_007168.1"/>
</dbReference>
<dbReference type="SMR" id="Q4L6V8"/>
<dbReference type="GeneID" id="93780710"/>
<dbReference type="KEGG" id="sha:SH1308"/>
<dbReference type="eggNOG" id="COG0572">
    <property type="taxonomic scope" value="Bacteria"/>
</dbReference>
<dbReference type="HOGENOM" id="CLU_021278_1_2_9"/>
<dbReference type="OrthoDB" id="9777642at2"/>
<dbReference type="UniPathway" id="UPA00574">
    <property type="reaction ID" value="UER00637"/>
</dbReference>
<dbReference type="UniPathway" id="UPA00579">
    <property type="reaction ID" value="UER00640"/>
</dbReference>
<dbReference type="Proteomes" id="UP000000543">
    <property type="component" value="Chromosome"/>
</dbReference>
<dbReference type="GO" id="GO:0005737">
    <property type="term" value="C:cytoplasm"/>
    <property type="evidence" value="ECO:0007669"/>
    <property type="project" value="UniProtKB-SubCell"/>
</dbReference>
<dbReference type="GO" id="GO:0005524">
    <property type="term" value="F:ATP binding"/>
    <property type="evidence" value="ECO:0007669"/>
    <property type="project" value="UniProtKB-UniRule"/>
</dbReference>
<dbReference type="GO" id="GO:0043771">
    <property type="term" value="F:cytidine kinase activity"/>
    <property type="evidence" value="ECO:0007669"/>
    <property type="project" value="RHEA"/>
</dbReference>
<dbReference type="GO" id="GO:0004849">
    <property type="term" value="F:uridine kinase activity"/>
    <property type="evidence" value="ECO:0007669"/>
    <property type="project" value="UniProtKB-UniRule"/>
</dbReference>
<dbReference type="GO" id="GO:0044211">
    <property type="term" value="P:CTP salvage"/>
    <property type="evidence" value="ECO:0007669"/>
    <property type="project" value="UniProtKB-UniRule"/>
</dbReference>
<dbReference type="GO" id="GO:0044206">
    <property type="term" value="P:UMP salvage"/>
    <property type="evidence" value="ECO:0007669"/>
    <property type="project" value="UniProtKB-UniRule"/>
</dbReference>
<dbReference type="CDD" id="cd02023">
    <property type="entry name" value="UMPK"/>
    <property type="match status" value="1"/>
</dbReference>
<dbReference type="Gene3D" id="3.40.50.300">
    <property type="entry name" value="P-loop containing nucleotide triphosphate hydrolases"/>
    <property type="match status" value="1"/>
</dbReference>
<dbReference type="HAMAP" id="MF_00551">
    <property type="entry name" value="Uridine_kinase"/>
    <property type="match status" value="1"/>
</dbReference>
<dbReference type="InterPro" id="IPR027417">
    <property type="entry name" value="P-loop_NTPase"/>
</dbReference>
<dbReference type="InterPro" id="IPR006083">
    <property type="entry name" value="PRK/URK"/>
</dbReference>
<dbReference type="InterPro" id="IPR026008">
    <property type="entry name" value="Uridine_kinase"/>
</dbReference>
<dbReference type="InterPro" id="IPR000764">
    <property type="entry name" value="Uridine_kinase-like"/>
</dbReference>
<dbReference type="NCBIfam" id="NF004018">
    <property type="entry name" value="PRK05480.1"/>
    <property type="match status" value="1"/>
</dbReference>
<dbReference type="NCBIfam" id="TIGR00235">
    <property type="entry name" value="udk"/>
    <property type="match status" value="1"/>
</dbReference>
<dbReference type="PANTHER" id="PTHR10285">
    <property type="entry name" value="URIDINE KINASE"/>
    <property type="match status" value="1"/>
</dbReference>
<dbReference type="Pfam" id="PF00485">
    <property type="entry name" value="PRK"/>
    <property type="match status" value="1"/>
</dbReference>
<dbReference type="PRINTS" id="PR00988">
    <property type="entry name" value="URIDINKINASE"/>
</dbReference>
<dbReference type="SUPFAM" id="SSF52540">
    <property type="entry name" value="P-loop containing nucleoside triphosphate hydrolases"/>
    <property type="match status" value="1"/>
</dbReference>
<accession>Q4L6V8</accession>
<keyword id="KW-0067">ATP-binding</keyword>
<keyword id="KW-0963">Cytoplasm</keyword>
<keyword id="KW-0418">Kinase</keyword>
<keyword id="KW-0547">Nucleotide-binding</keyword>
<keyword id="KW-0808">Transferase</keyword>
<protein>
    <recommendedName>
        <fullName evidence="1">Uridine kinase</fullName>
        <ecNumber evidence="1">2.7.1.48</ecNumber>
    </recommendedName>
    <alternativeName>
        <fullName evidence="1">Cytidine monophosphokinase</fullName>
    </alternativeName>
    <alternativeName>
        <fullName evidence="1">Uridine monophosphokinase</fullName>
    </alternativeName>
</protein>
<comment type="catalytic activity">
    <reaction evidence="1">
        <text>uridine + ATP = UMP + ADP + H(+)</text>
        <dbReference type="Rhea" id="RHEA:16825"/>
        <dbReference type="ChEBI" id="CHEBI:15378"/>
        <dbReference type="ChEBI" id="CHEBI:16704"/>
        <dbReference type="ChEBI" id="CHEBI:30616"/>
        <dbReference type="ChEBI" id="CHEBI:57865"/>
        <dbReference type="ChEBI" id="CHEBI:456216"/>
        <dbReference type="EC" id="2.7.1.48"/>
    </reaction>
</comment>
<comment type="catalytic activity">
    <reaction evidence="1">
        <text>cytidine + ATP = CMP + ADP + H(+)</text>
        <dbReference type="Rhea" id="RHEA:24674"/>
        <dbReference type="ChEBI" id="CHEBI:15378"/>
        <dbReference type="ChEBI" id="CHEBI:17562"/>
        <dbReference type="ChEBI" id="CHEBI:30616"/>
        <dbReference type="ChEBI" id="CHEBI:60377"/>
        <dbReference type="ChEBI" id="CHEBI:456216"/>
        <dbReference type="EC" id="2.7.1.48"/>
    </reaction>
</comment>
<comment type="pathway">
    <text evidence="1">Pyrimidine metabolism; CTP biosynthesis via salvage pathway; CTP from cytidine: step 1/3.</text>
</comment>
<comment type="pathway">
    <text evidence="1">Pyrimidine metabolism; UMP biosynthesis via salvage pathway; UMP from uridine: step 1/1.</text>
</comment>
<comment type="subcellular location">
    <subcellularLocation>
        <location evidence="1">Cytoplasm</location>
    </subcellularLocation>
</comment>
<comment type="similarity">
    <text evidence="1">Belongs to the uridine kinase family.</text>
</comment>
<organism>
    <name type="scientific">Staphylococcus haemolyticus (strain JCSC1435)</name>
    <dbReference type="NCBI Taxonomy" id="279808"/>
    <lineage>
        <taxon>Bacteria</taxon>
        <taxon>Bacillati</taxon>
        <taxon>Bacillota</taxon>
        <taxon>Bacilli</taxon>
        <taxon>Bacillales</taxon>
        <taxon>Staphylococcaceae</taxon>
        <taxon>Staphylococcus</taxon>
    </lineage>
</organism>
<name>URK_STAHJ</name>
<reference key="1">
    <citation type="journal article" date="2005" name="J. Bacteriol.">
        <title>Whole-genome sequencing of Staphylococcus haemolyticus uncovers the extreme plasticity of its genome and the evolution of human-colonizing staphylococcal species.</title>
        <authorList>
            <person name="Takeuchi F."/>
            <person name="Watanabe S."/>
            <person name="Baba T."/>
            <person name="Yuzawa H."/>
            <person name="Ito T."/>
            <person name="Morimoto Y."/>
            <person name="Kuroda M."/>
            <person name="Cui L."/>
            <person name="Takahashi M."/>
            <person name="Ankai A."/>
            <person name="Baba S."/>
            <person name="Fukui S."/>
            <person name="Lee J.C."/>
            <person name="Hiramatsu K."/>
        </authorList>
    </citation>
    <scope>NUCLEOTIDE SEQUENCE [LARGE SCALE GENOMIC DNA]</scope>
    <source>
        <strain>JCSC1435</strain>
    </source>
</reference>
<sequence length="207" mass="23556">MANTTIIGIAGGSGSGKTTVTNEIMKNLEGHSVALLAQDYYYKDQSHLTFEERLETNYDHPFAFDNDLLIENLKDLRNGHAVEVPTYDYTNHTRSNETIAFEPKDVIIVEGIFALENKTLRDMMDVKIYVDTDADLRILRRLVRDTKERGRSMESVINQYLNVVKPMHNQFIEPTKKYADIIIPEGGSNKVAIDIMTTKIQTLVSKQ</sequence>
<gene>
    <name evidence="1" type="primary">udk</name>
    <name type="ordered locus">SH1308</name>
</gene>